<dbReference type="EC" id="1.5.1.5" evidence="1"/>
<dbReference type="EC" id="3.5.4.9" evidence="1"/>
<dbReference type="EMBL" id="CP000260">
    <property type="protein sequence ID" value="ABF34315.1"/>
    <property type="status" value="ALT_INIT"/>
    <property type="molecule type" value="Genomic_DNA"/>
</dbReference>
<dbReference type="RefSeq" id="WP_002989114.1">
    <property type="nucleotide sequence ID" value="NZ_CVUH01000008.1"/>
</dbReference>
<dbReference type="SMR" id="Q1JG29"/>
<dbReference type="KEGG" id="sph:MGAS10270_Spy1250"/>
<dbReference type="HOGENOM" id="CLU_034045_2_1_9"/>
<dbReference type="UniPathway" id="UPA00193"/>
<dbReference type="Proteomes" id="UP000002436">
    <property type="component" value="Chromosome"/>
</dbReference>
<dbReference type="GO" id="GO:0005829">
    <property type="term" value="C:cytosol"/>
    <property type="evidence" value="ECO:0007669"/>
    <property type="project" value="TreeGrafter"/>
</dbReference>
<dbReference type="GO" id="GO:0004477">
    <property type="term" value="F:methenyltetrahydrofolate cyclohydrolase activity"/>
    <property type="evidence" value="ECO:0007669"/>
    <property type="project" value="UniProtKB-UniRule"/>
</dbReference>
<dbReference type="GO" id="GO:0004488">
    <property type="term" value="F:methylenetetrahydrofolate dehydrogenase (NADP+) activity"/>
    <property type="evidence" value="ECO:0007669"/>
    <property type="project" value="UniProtKB-UniRule"/>
</dbReference>
<dbReference type="GO" id="GO:0000105">
    <property type="term" value="P:L-histidine biosynthetic process"/>
    <property type="evidence" value="ECO:0007669"/>
    <property type="project" value="UniProtKB-KW"/>
</dbReference>
<dbReference type="GO" id="GO:0009086">
    <property type="term" value="P:methionine biosynthetic process"/>
    <property type="evidence" value="ECO:0007669"/>
    <property type="project" value="UniProtKB-KW"/>
</dbReference>
<dbReference type="GO" id="GO:0006164">
    <property type="term" value="P:purine nucleotide biosynthetic process"/>
    <property type="evidence" value="ECO:0007669"/>
    <property type="project" value="UniProtKB-KW"/>
</dbReference>
<dbReference type="GO" id="GO:0035999">
    <property type="term" value="P:tetrahydrofolate interconversion"/>
    <property type="evidence" value="ECO:0007669"/>
    <property type="project" value="UniProtKB-UniRule"/>
</dbReference>
<dbReference type="CDD" id="cd01080">
    <property type="entry name" value="NAD_bind_m-THF_DH_Cyclohyd"/>
    <property type="match status" value="1"/>
</dbReference>
<dbReference type="FunFam" id="3.40.50.10860:FF:000001">
    <property type="entry name" value="Bifunctional protein FolD"/>
    <property type="match status" value="1"/>
</dbReference>
<dbReference type="FunFam" id="3.40.50.720:FF:000094">
    <property type="entry name" value="Bifunctional protein FolD"/>
    <property type="match status" value="1"/>
</dbReference>
<dbReference type="Gene3D" id="3.40.50.10860">
    <property type="entry name" value="Leucine Dehydrogenase, chain A, domain 1"/>
    <property type="match status" value="1"/>
</dbReference>
<dbReference type="Gene3D" id="3.40.50.720">
    <property type="entry name" value="NAD(P)-binding Rossmann-like Domain"/>
    <property type="match status" value="1"/>
</dbReference>
<dbReference type="HAMAP" id="MF_01576">
    <property type="entry name" value="THF_DHG_CYH"/>
    <property type="match status" value="1"/>
</dbReference>
<dbReference type="InterPro" id="IPR046346">
    <property type="entry name" value="Aminoacid_DH-like_N_sf"/>
</dbReference>
<dbReference type="InterPro" id="IPR036291">
    <property type="entry name" value="NAD(P)-bd_dom_sf"/>
</dbReference>
<dbReference type="InterPro" id="IPR000672">
    <property type="entry name" value="THF_DH/CycHdrlase"/>
</dbReference>
<dbReference type="InterPro" id="IPR020630">
    <property type="entry name" value="THF_DH/CycHdrlase_cat_dom"/>
</dbReference>
<dbReference type="InterPro" id="IPR020867">
    <property type="entry name" value="THF_DH/CycHdrlase_CS"/>
</dbReference>
<dbReference type="InterPro" id="IPR020631">
    <property type="entry name" value="THF_DH/CycHdrlase_NAD-bd_dom"/>
</dbReference>
<dbReference type="NCBIfam" id="NF008058">
    <property type="entry name" value="PRK10792.1"/>
    <property type="match status" value="1"/>
</dbReference>
<dbReference type="NCBIfam" id="NF010776">
    <property type="entry name" value="PRK14179.1"/>
    <property type="match status" value="1"/>
</dbReference>
<dbReference type="NCBIfam" id="NF010783">
    <property type="entry name" value="PRK14186.1"/>
    <property type="match status" value="1"/>
</dbReference>
<dbReference type="NCBIfam" id="NF010785">
    <property type="entry name" value="PRK14188.1"/>
    <property type="match status" value="1"/>
</dbReference>
<dbReference type="PANTHER" id="PTHR48099:SF5">
    <property type="entry name" value="C-1-TETRAHYDROFOLATE SYNTHASE, CYTOPLASMIC"/>
    <property type="match status" value="1"/>
</dbReference>
<dbReference type="PANTHER" id="PTHR48099">
    <property type="entry name" value="C-1-TETRAHYDROFOLATE SYNTHASE, CYTOPLASMIC-RELATED"/>
    <property type="match status" value="1"/>
</dbReference>
<dbReference type="Pfam" id="PF00763">
    <property type="entry name" value="THF_DHG_CYH"/>
    <property type="match status" value="1"/>
</dbReference>
<dbReference type="Pfam" id="PF02882">
    <property type="entry name" value="THF_DHG_CYH_C"/>
    <property type="match status" value="1"/>
</dbReference>
<dbReference type="PRINTS" id="PR00085">
    <property type="entry name" value="THFDHDRGNASE"/>
</dbReference>
<dbReference type="SUPFAM" id="SSF53223">
    <property type="entry name" value="Aminoacid dehydrogenase-like, N-terminal domain"/>
    <property type="match status" value="1"/>
</dbReference>
<dbReference type="SUPFAM" id="SSF51735">
    <property type="entry name" value="NAD(P)-binding Rossmann-fold domains"/>
    <property type="match status" value="1"/>
</dbReference>
<dbReference type="PROSITE" id="PS00766">
    <property type="entry name" value="THF_DHG_CYH_1"/>
    <property type="match status" value="1"/>
</dbReference>
<dbReference type="PROSITE" id="PS00767">
    <property type="entry name" value="THF_DHG_CYH_2"/>
    <property type="match status" value="1"/>
</dbReference>
<feature type="chain" id="PRO_0000268518" description="Bifunctional protein FolD">
    <location>
        <begin position="1"/>
        <end position="284"/>
    </location>
</feature>
<feature type="binding site" evidence="1">
    <location>
        <begin position="165"/>
        <end position="167"/>
    </location>
    <ligand>
        <name>NADP(+)</name>
        <dbReference type="ChEBI" id="CHEBI:58349"/>
    </ligand>
</feature>
<feature type="binding site" evidence="1">
    <location>
        <position position="190"/>
    </location>
    <ligand>
        <name>NADP(+)</name>
        <dbReference type="ChEBI" id="CHEBI:58349"/>
    </ligand>
</feature>
<reference key="1">
    <citation type="journal article" date="2006" name="Proc. Natl. Acad. Sci. U.S.A.">
        <title>Molecular genetic anatomy of inter- and intraserotype variation in the human bacterial pathogen group A Streptococcus.</title>
        <authorList>
            <person name="Beres S.B."/>
            <person name="Richter E.W."/>
            <person name="Nagiec M.J."/>
            <person name="Sumby P."/>
            <person name="Porcella S.F."/>
            <person name="DeLeo F.R."/>
            <person name="Musser J.M."/>
        </authorList>
    </citation>
    <scope>NUCLEOTIDE SEQUENCE [LARGE SCALE GENOMIC DNA]</scope>
    <source>
        <strain>MGAS10270</strain>
    </source>
</reference>
<sequence>MTELIDGKALAQKMQQELAAKVNNLKQKKGIVPGLAVILVGDDPASQVYVRNKERAALTVGFKSETVRLSEFICQEELIAVIERYNADNTIHGILVQLPLPNHINDKKIILAIDPKKDVDGFHPMNTGHLWSGRPLMVPCTPSGIMELLREYNVNLEGKHAVIIGRSNIVGKPMAQLLLDKNATVTLTHSRTRQLEEVCRCADVLIVAIGQGHFITKQYIKEGAIVIDVGMNRDDNGKLIGDVAFDEVAEVAAKITPVPGGVGPMTIAMLLEQTYQSALRSTHK</sequence>
<proteinExistence type="inferred from homology"/>
<gene>
    <name evidence="1" type="primary">folD</name>
    <name type="ordered locus">MGAS10270_Spy1250</name>
</gene>
<organism>
    <name type="scientific">Streptococcus pyogenes serotype M2 (strain MGAS10270)</name>
    <dbReference type="NCBI Taxonomy" id="370552"/>
    <lineage>
        <taxon>Bacteria</taxon>
        <taxon>Bacillati</taxon>
        <taxon>Bacillota</taxon>
        <taxon>Bacilli</taxon>
        <taxon>Lactobacillales</taxon>
        <taxon>Streptococcaceae</taxon>
        <taxon>Streptococcus</taxon>
    </lineage>
</organism>
<comment type="function">
    <text evidence="1">Catalyzes the oxidation of 5,10-methylenetetrahydrofolate to 5,10-methenyltetrahydrofolate and then the hydrolysis of 5,10-methenyltetrahydrofolate to 10-formyltetrahydrofolate.</text>
</comment>
<comment type="catalytic activity">
    <reaction evidence="1">
        <text>(6R)-5,10-methylene-5,6,7,8-tetrahydrofolate + NADP(+) = (6R)-5,10-methenyltetrahydrofolate + NADPH</text>
        <dbReference type="Rhea" id="RHEA:22812"/>
        <dbReference type="ChEBI" id="CHEBI:15636"/>
        <dbReference type="ChEBI" id="CHEBI:57455"/>
        <dbReference type="ChEBI" id="CHEBI:57783"/>
        <dbReference type="ChEBI" id="CHEBI:58349"/>
        <dbReference type="EC" id="1.5.1.5"/>
    </reaction>
</comment>
<comment type="catalytic activity">
    <reaction evidence="1">
        <text>(6R)-5,10-methenyltetrahydrofolate + H2O = (6R)-10-formyltetrahydrofolate + H(+)</text>
        <dbReference type="Rhea" id="RHEA:23700"/>
        <dbReference type="ChEBI" id="CHEBI:15377"/>
        <dbReference type="ChEBI" id="CHEBI:15378"/>
        <dbReference type="ChEBI" id="CHEBI:57455"/>
        <dbReference type="ChEBI" id="CHEBI:195366"/>
        <dbReference type="EC" id="3.5.4.9"/>
    </reaction>
</comment>
<comment type="pathway">
    <text evidence="1">One-carbon metabolism; tetrahydrofolate interconversion.</text>
</comment>
<comment type="subunit">
    <text evidence="1">Homodimer.</text>
</comment>
<comment type="similarity">
    <text evidence="1">Belongs to the tetrahydrofolate dehydrogenase/cyclohydrolase family.</text>
</comment>
<comment type="sequence caution" evidence="2">
    <conflict type="erroneous initiation">
        <sequence resource="EMBL-CDS" id="ABF34315"/>
    </conflict>
</comment>
<name>FOLD_STRPD</name>
<accession>Q1JG29</accession>
<evidence type="ECO:0000255" key="1">
    <source>
        <dbReference type="HAMAP-Rule" id="MF_01576"/>
    </source>
</evidence>
<evidence type="ECO:0000305" key="2"/>
<keyword id="KW-0028">Amino-acid biosynthesis</keyword>
<keyword id="KW-0368">Histidine biosynthesis</keyword>
<keyword id="KW-0378">Hydrolase</keyword>
<keyword id="KW-0486">Methionine biosynthesis</keyword>
<keyword id="KW-0511">Multifunctional enzyme</keyword>
<keyword id="KW-0521">NADP</keyword>
<keyword id="KW-0554">One-carbon metabolism</keyword>
<keyword id="KW-0560">Oxidoreductase</keyword>
<keyword id="KW-0658">Purine biosynthesis</keyword>
<protein>
    <recommendedName>
        <fullName evidence="1">Bifunctional protein FolD</fullName>
    </recommendedName>
    <domain>
        <recommendedName>
            <fullName evidence="1">Methylenetetrahydrofolate dehydrogenase</fullName>
            <ecNumber evidence="1">1.5.1.5</ecNumber>
        </recommendedName>
    </domain>
    <domain>
        <recommendedName>
            <fullName evidence="1">Methenyltetrahydrofolate cyclohydrolase</fullName>
            <ecNumber evidence="1">3.5.4.9</ecNumber>
        </recommendedName>
    </domain>
</protein>